<gene>
    <name evidence="3" type="primary">PPIP5K1</name>
    <name type="synonym">HISPPD2A</name>
    <name type="synonym">VIP1</name>
</gene>
<accession>A7Z050</accession>
<feature type="chain" id="PRO_0000315687" description="Inositol hexakisphosphate and diphosphoinositol-pentakisphosphate kinase 1">
    <location>
        <begin position="1"/>
        <end position="1477"/>
    </location>
</feature>
<feature type="region of interest" description="Disordered" evidence="4">
    <location>
        <begin position="27"/>
        <end position="47"/>
    </location>
</feature>
<feature type="region of interest" description="Polyphosphoinositide-binding domain" evidence="2">
    <location>
        <begin position="382"/>
        <end position="453"/>
    </location>
</feature>
<feature type="region of interest" description="Disordered" evidence="4">
    <location>
        <begin position="910"/>
        <end position="1016"/>
    </location>
</feature>
<feature type="region of interest" description="Disordered" evidence="4">
    <location>
        <begin position="1131"/>
        <end position="1248"/>
    </location>
</feature>
<feature type="region of interest" description="Disordered" evidence="4">
    <location>
        <begin position="1438"/>
        <end position="1477"/>
    </location>
</feature>
<feature type="compositionally biased region" description="Acidic residues" evidence="4">
    <location>
        <begin position="37"/>
        <end position="47"/>
    </location>
</feature>
<feature type="compositionally biased region" description="Polar residues" evidence="4">
    <location>
        <begin position="1001"/>
        <end position="1016"/>
    </location>
</feature>
<feature type="compositionally biased region" description="Low complexity" evidence="4">
    <location>
        <begin position="1164"/>
        <end position="1182"/>
    </location>
</feature>
<feature type="compositionally biased region" description="Polar residues" evidence="4">
    <location>
        <begin position="1446"/>
        <end position="1460"/>
    </location>
</feature>
<feature type="binding site" evidence="2">
    <location>
        <begin position="64"/>
        <end position="65"/>
    </location>
    <ligand>
        <name>substrate</name>
    </ligand>
</feature>
<feature type="binding site" evidence="2">
    <location>
        <position position="145"/>
    </location>
    <ligand>
        <name>ATP</name>
        <dbReference type="ChEBI" id="CHEBI:30616"/>
    </ligand>
</feature>
<feature type="binding site" evidence="2">
    <location>
        <position position="198"/>
    </location>
    <ligand>
        <name>ATP</name>
        <dbReference type="ChEBI" id="CHEBI:30616"/>
    </ligand>
</feature>
<feature type="binding site" evidence="2">
    <location>
        <position position="205"/>
    </location>
    <ligand>
        <name>ATP</name>
        <dbReference type="ChEBI" id="CHEBI:30616"/>
    </ligand>
</feature>
<feature type="binding site" evidence="2">
    <location>
        <begin position="224"/>
        <end position="225"/>
    </location>
    <ligand>
        <name>substrate</name>
    </ligand>
</feature>
<feature type="binding site" evidence="2">
    <location>
        <position position="224"/>
    </location>
    <ligand>
        <name>ATP</name>
        <dbReference type="ChEBI" id="CHEBI:30616"/>
    </ligand>
</feature>
<feature type="binding site" evidence="2">
    <location>
        <begin position="248"/>
        <end position="251"/>
    </location>
    <ligand>
        <name>ATP</name>
        <dbReference type="ChEBI" id="CHEBI:30616"/>
    </ligand>
</feature>
<feature type="binding site" evidence="2">
    <location>
        <begin position="257"/>
        <end position="259"/>
    </location>
    <ligand>
        <name>ATP</name>
        <dbReference type="ChEBI" id="CHEBI:30616"/>
    </ligand>
</feature>
<feature type="binding site" evidence="2">
    <location>
        <position position="259"/>
    </location>
    <ligand>
        <name>substrate</name>
    </ligand>
</feature>
<feature type="binding site" evidence="2">
    <location>
        <position position="273"/>
    </location>
    <ligand>
        <name>substrate</name>
    </ligand>
</feature>
<feature type="binding site" evidence="2">
    <location>
        <position position="275"/>
    </location>
    <ligand>
        <name>ATP</name>
        <dbReference type="ChEBI" id="CHEBI:30616"/>
    </ligand>
</feature>
<feature type="binding site" evidence="2">
    <location>
        <position position="320"/>
    </location>
    <ligand>
        <name>ATP</name>
        <dbReference type="ChEBI" id="CHEBI:30616"/>
    </ligand>
</feature>
<feature type="binding site" evidence="2">
    <location>
        <begin position="332"/>
        <end position="334"/>
    </location>
    <ligand>
        <name>ATP</name>
        <dbReference type="ChEBI" id="CHEBI:30616"/>
    </ligand>
</feature>
<feature type="binding site" evidence="2">
    <location>
        <begin position="337"/>
        <end position="340"/>
    </location>
    <ligand>
        <name>substrate</name>
    </ligand>
</feature>
<feature type="modified residue" description="Phosphoserine" evidence="3">
    <location>
        <position position="940"/>
    </location>
</feature>
<feature type="modified residue" description="Phosphoserine" evidence="3">
    <location>
        <position position="983"/>
    </location>
</feature>
<feature type="modified residue" description="Phosphoserine" evidence="3">
    <location>
        <position position="1033"/>
    </location>
</feature>
<feature type="modified residue" description="Phosphoserine" evidence="3">
    <location>
        <position position="1069"/>
    </location>
</feature>
<feature type="modified residue" description="Phosphoserine" evidence="1">
    <location>
        <position position="1141"/>
    </location>
</feature>
<feature type="modified residue" description="Phosphoserine" evidence="3">
    <location>
        <position position="1148"/>
    </location>
</feature>
<proteinExistence type="evidence at transcript level"/>
<reference key="1">
    <citation type="submission" date="2007-09" db="EMBL/GenBank/DDBJ databases">
        <authorList>
            <consortium name="NIH - Mammalian Gene Collection (MGC) project"/>
        </authorList>
    </citation>
    <scope>NUCLEOTIDE SEQUENCE [LARGE SCALE MRNA]</scope>
    <source>
        <strain>Hereford</strain>
        <tissue>Brain cortex</tissue>
    </source>
</reference>
<evidence type="ECO:0000250" key="1">
    <source>
        <dbReference type="UniProtKB" id="A2ARP1"/>
    </source>
</evidence>
<evidence type="ECO:0000250" key="2">
    <source>
        <dbReference type="UniProtKB" id="O43314"/>
    </source>
</evidence>
<evidence type="ECO:0000250" key="3">
    <source>
        <dbReference type="UniProtKB" id="Q6PFW1"/>
    </source>
</evidence>
<evidence type="ECO:0000256" key="4">
    <source>
        <dbReference type="SAM" id="MobiDB-lite"/>
    </source>
</evidence>
<evidence type="ECO:0000305" key="5"/>
<dbReference type="EC" id="2.7.4.24" evidence="3"/>
<dbReference type="EMBL" id="BC153248">
    <property type="protein sequence ID" value="AAI53249.1"/>
    <property type="molecule type" value="mRNA"/>
</dbReference>
<dbReference type="RefSeq" id="NP_001098824.1">
    <property type="nucleotide sequence ID" value="NM_001105354.1"/>
</dbReference>
<dbReference type="RefSeq" id="XP_005222243.1">
    <property type="nucleotide sequence ID" value="XM_005222186.5"/>
</dbReference>
<dbReference type="SMR" id="A7Z050"/>
<dbReference type="FunCoup" id="A7Z050">
    <property type="interactions" value="935"/>
</dbReference>
<dbReference type="STRING" id="9913.ENSBTAP00000067537"/>
<dbReference type="PaxDb" id="9913-ENSBTAP00000018635"/>
<dbReference type="GeneID" id="510684"/>
<dbReference type="KEGG" id="bta:510684"/>
<dbReference type="CTD" id="9677"/>
<dbReference type="VEuPathDB" id="HostDB:ENSBTAG00000014005"/>
<dbReference type="eggNOG" id="KOG1057">
    <property type="taxonomic scope" value="Eukaryota"/>
</dbReference>
<dbReference type="HOGENOM" id="CLU_000914_0_0_1"/>
<dbReference type="InParanoid" id="A7Z050"/>
<dbReference type="OrthoDB" id="18042at2759"/>
<dbReference type="TreeFam" id="TF313594"/>
<dbReference type="Reactome" id="R-BTA-1855167">
    <property type="pathway name" value="Synthesis of pyrophosphates in the cytosol"/>
</dbReference>
<dbReference type="Proteomes" id="UP000009136">
    <property type="component" value="Chromosome 21"/>
</dbReference>
<dbReference type="Bgee" id="ENSBTAG00000014005">
    <property type="expression patterns" value="Expressed in retina and 102 other cell types or tissues"/>
</dbReference>
<dbReference type="GO" id="GO:0005829">
    <property type="term" value="C:cytosol"/>
    <property type="evidence" value="ECO:0000250"/>
    <property type="project" value="UniProtKB"/>
</dbReference>
<dbReference type="GO" id="GO:0005886">
    <property type="term" value="C:plasma membrane"/>
    <property type="evidence" value="ECO:0007669"/>
    <property type="project" value="UniProtKB-SubCell"/>
</dbReference>
<dbReference type="GO" id="GO:0033857">
    <property type="term" value="F:5-diphosphoinositol pentakisphosphate 1-kinase activity"/>
    <property type="evidence" value="ECO:0000250"/>
    <property type="project" value="UniProtKB"/>
</dbReference>
<dbReference type="GO" id="GO:0005524">
    <property type="term" value="F:ATP binding"/>
    <property type="evidence" value="ECO:0000250"/>
    <property type="project" value="UniProtKB"/>
</dbReference>
<dbReference type="GO" id="GO:0052723">
    <property type="term" value="F:inositol hexakisphosphate 1-kinase activity"/>
    <property type="evidence" value="ECO:0007669"/>
    <property type="project" value="RHEA"/>
</dbReference>
<dbReference type="GO" id="GO:0000832">
    <property type="term" value="F:inositol hexakisphosphate 5-kinase activity"/>
    <property type="evidence" value="ECO:0000250"/>
    <property type="project" value="UniProtKB"/>
</dbReference>
<dbReference type="GO" id="GO:0000828">
    <property type="term" value="F:inositol hexakisphosphate kinase activity"/>
    <property type="evidence" value="ECO:0000250"/>
    <property type="project" value="UniProtKB"/>
</dbReference>
<dbReference type="GO" id="GO:0000827">
    <property type="term" value="F:inositol-1,3,4,5,6-pentakisphosphate kinase activity"/>
    <property type="evidence" value="ECO:0000250"/>
    <property type="project" value="UniProtKB"/>
</dbReference>
<dbReference type="GO" id="GO:0006020">
    <property type="term" value="P:inositol metabolic process"/>
    <property type="evidence" value="ECO:0000250"/>
    <property type="project" value="UniProtKB"/>
</dbReference>
<dbReference type="GO" id="GO:0032958">
    <property type="term" value="P:inositol phosphate biosynthetic process"/>
    <property type="evidence" value="ECO:0000318"/>
    <property type="project" value="GO_Central"/>
</dbReference>
<dbReference type="CDD" id="cd07061">
    <property type="entry name" value="HP_HAP_like"/>
    <property type="match status" value="1"/>
</dbReference>
<dbReference type="FunFam" id="3.30.470.20:FF:000003">
    <property type="entry name" value="Inositol hexakisphosphate and diphosphoinositol-pentakisphosphate kinase"/>
    <property type="match status" value="1"/>
</dbReference>
<dbReference type="FunFam" id="3.40.50.11950:FF:000001">
    <property type="entry name" value="Inositol hexakisphosphate and diphosphoinositol-pentakisphosphate kinase"/>
    <property type="match status" value="1"/>
</dbReference>
<dbReference type="FunFam" id="3.40.50.11950:FF:000003">
    <property type="entry name" value="Inositol hexakisphosphate and diphosphoinositol-pentakisphosphate kinase"/>
    <property type="match status" value="1"/>
</dbReference>
<dbReference type="Gene3D" id="3.40.50.11950">
    <property type="match status" value="1"/>
</dbReference>
<dbReference type="Gene3D" id="3.30.470.20">
    <property type="entry name" value="ATP-grasp fold, B domain"/>
    <property type="match status" value="1"/>
</dbReference>
<dbReference type="Gene3D" id="3.40.50.1240">
    <property type="entry name" value="Phosphoglycerate mutase-like"/>
    <property type="match status" value="1"/>
</dbReference>
<dbReference type="InterPro" id="IPR033379">
    <property type="entry name" value="Acid_Pase_AS"/>
</dbReference>
<dbReference type="InterPro" id="IPR000560">
    <property type="entry name" value="His_Pase_clade-2"/>
</dbReference>
<dbReference type="InterPro" id="IPR037446">
    <property type="entry name" value="His_Pase_VIP1"/>
</dbReference>
<dbReference type="InterPro" id="IPR029033">
    <property type="entry name" value="His_PPase_superfam"/>
</dbReference>
<dbReference type="InterPro" id="IPR040557">
    <property type="entry name" value="VIP1_N"/>
</dbReference>
<dbReference type="PANTHER" id="PTHR12750">
    <property type="entry name" value="DIPHOSPHOINOSITOL PENTAKISPHOSPHATE KINASE"/>
    <property type="match status" value="1"/>
</dbReference>
<dbReference type="PANTHER" id="PTHR12750:SF11">
    <property type="entry name" value="INOSITOL HEXAKISPHOSPHATE AND DIPHOSPHOINOSITOL-PENTAKISPHOSPHATE KINASE 1"/>
    <property type="match status" value="1"/>
</dbReference>
<dbReference type="Pfam" id="PF00328">
    <property type="entry name" value="His_Phos_2"/>
    <property type="match status" value="1"/>
</dbReference>
<dbReference type="Pfam" id="PF18086">
    <property type="entry name" value="PPIP5K2_N"/>
    <property type="match status" value="1"/>
</dbReference>
<dbReference type="SUPFAM" id="SSF56059">
    <property type="entry name" value="Glutathione synthetase ATP-binding domain-like"/>
    <property type="match status" value="1"/>
</dbReference>
<dbReference type="SUPFAM" id="SSF53254">
    <property type="entry name" value="Phosphoglycerate mutase-like"/>
    <property type="match status" value="1"/>
</dbReference>
<dbReference type="PROSITE" id="PS00616">
    <property type="entry name" value="HIS_ACID_PHOSPHAT_1"/>
    <property type="match status" value="1"/>
</dbReference>
<protein>
    <recommendedName>
        <fullName evidence="3">Inositol hexakisphosphate and diphosphoinositol-pentakisphosphate kinase 1</fullName>
        <ecNumber evidence="3">2.7.4.24</ecNumber>
    </recommendedName>
    <alternativeName>
        <fullName>Diphosphoinositol pentakisphosphate kinase 1</fullName>
    </alternativeName>
    <alternativeName>
        <fullName>Histidine acid phosphatase domain-containing protein 2A</fullName>
    </alternativeName>
    <alternativeName>
        <fullName>InsP6 and PP-IP5 kinase 1</fullName>
    </alternativeName>
</protein>
<name>VIP1_BOVIN</name>
<keyword id="KW-0067">ATP-binding</keyword>
<keyword id="KW-1003">Cell membrane</keyword>
<keyword id="KW-0963">Cytoplasm</keyword>
<keyword id="KW-0418">Kinase</keyword>
<keyword id="KW-0472">Membrane</keyword>
<keyword id="KW-0547">Nucleotide-binding</keyword>
<keyword id="KW-0597">Phosphoprotein</keyword>
<keyword id="KW-1185">Reference proteome</keyword>
<keyword id="KW-0808">Transferase</keyword>
<sequence length="1477" mass="163665">MWSLPASEGESATAHFFLGAGDEGLGTRGLGMRPEESDSELLEDEEDEVPPEPQIIVGICAMTKKSKSKPMTQILERLCRFDYLTVIILGEDVILNEPVENWPSCHCLISFHSKGFPLDKAVAYSKLRNPFLINDLAMQYYIQDRREVYRILQEEGIDLPRYAVLNRDPARPEECNLIEGEDQVEVNGAVFPKPFVEKPVSAEDHNVYIYYPSSAGGGSQRLFRKIGSRSSVYSPESSVRKTGSYIYEEFMPTDGTDVKVYTVGPDYAHAEARKSPALDGKVERDSEGKEIRYPVMLTAMEKLVARKVCVAFKQTVCGFDLLRANGHSFVCDVNGFSFVKNSMKYYDDCAKILGNTIMRELAPQFQIPWSIPMEAEDIPIVPTTSGTMMELRCVIAIIRHGDRTPKQKMKMEVTHPRFFSLFEKHGGYKTGKLKLKRPEQLQEVLDITRLLLAELEKEPGGEIEEKTGKLEQLKSVLEMYGHFSGINRKVQLTYYPHGVKASNEGQDTQREALAPSLLLVLKWGGELTPAGRVQAEELGRAFRCMYPGGQGDYAGFPGCGLLRLHSTFRHDLKIYASDEGRVQMTAAAFAKGLLALEGELTPILVQMVKSANMNGLLDSDGDSLSSCQHRVKARLHHILQQDAPFGPEDYNQLAPTGSTSLLSSMAVIQNPVKVCDQVFDLIENLTHQIRERMQDPKSVDLQLYHSETLELMLQRWSKLERDFRQKSGRYDISKIPDIYDCVKYDVQHNGSLGLQGTAELLRLSKALADVVIPQEYGISREEKLEIAVGFCLPLLRKILLDLQRTHEDESVNKLHPLYSRGVLSPGRHVRTRLYFTSESHVHSLLSVFRYGGLLDETKDTQWQRALAYLSAISELNYMTQIVIMLYEDNTRDPLSEERFHVELHFSPGVKGVEEEGSAPTGCGFRPASSENEERKADQGSVEDLCPGKASDEPDRALQTSPLPSEGPGLPKRSPLIRNRKAGSMEVLSETSSSRPGGHRLFSSSRPPTEMKQSGLGSQCTGLFSTTVLGGSSSAPNLQDYARSQGKKLPPASLKHRDELLFVPAVKRFSVSFAKHPTNGFEGCSMVPTIYPLETLHNALSLRQVSEFLSRVCQRHTEAQAQASAALFDSMHSNQASDSPFSPPRTLHSPTLQLQQRSEKPPWYSSGPSSTVSSAGPSSPTAVDGNCPFGFSDQPSVSSHVTEEYQGLGLLQEAPGSGAQEPPLEGQQEPFEQNQSPQEPPVETKKPCQEVAEEVSQPCQDIPEEVNQPCQQVSDICQPCEENHDDVDQTCQEVPQISQPCEDASQLYQKVSKEVCELCQNSEEVNQPCQGVPVEIGRLVHGFPVGVGGLAQEVLGEVGRPTQEIPEELSQSCQEFSVDIGRLAQEASAINLLSPDTPEVDNPPLEFPGEGALQAQEVSEWVKQQQSYVVPELIDQLSREEVPQVQCPPSNANPQSQSLAPDQNAPLPPATCDSSFSH</sequence>
<comment type="function">
    <text evidence="3">Bifunctional inositol kinase that acts in concert with the IP6K kinases IP6K1, IP6K2 and IP6K3 to synthesize the diphosphate group-containing inositol pyrophosphates diphosphoinositol pentakisphosphate, PP-InsP5, and bis-diphosphoinositol tetrakisphosphate, (PP)2-InsP4. PP-InsP5 and (PP)2-InsP4, also respectively called InsP7 and InsP8, regulate a variety of cellular processes, including apoptosis, vesicle trafficking, cytoskeletal dynamics, exocytosis, insulin signaling and neutrophil activation. Phosphorylates inositol hexakisphosphate (InsP6) at position 1 to produce PP-InsP5 which is in turn phosphorylated by IP6Ks to produce (PP)2-InsP4. Alternatively, phosphorylates PP-InsP5 at position 1, produced by IP6Ks from InsP6, to produce (PP)2-InsP4. Activated when cells are exposed to hyperosmotic stress.</text>
</comment>
<comment type="catalytic activity">
    <reaction evidence="3">
        <text>1D-myo-inositol hexakisphosphate + ATP = 1-diphospho-1D-myo-inositol 2,3,4,5,6-pentakisphosphate + ADP</text>
        <dbReference type="Rhea" id="RHEA:37459"/>
        <dbReference type="ChEBI" id="CHEBI:30616"/>
        <dbReference type="ChEBI" id="CHEBI:58130"/>
        <dbReference type="ChEBI" id="CHEBI:74946"/>
        <dbReference type="ChEBI" id="CHEBI:456216"/>
        <dbReference type="EC" id="2.7.4.24"/>
    </reaction>
    <physiologicalReaction direction="left-to-right" evidence="3">
        <dbReference type="Rhea" id="RHEA:37460"/>
    </physiologicalReaction>
</comment>
<comment type="catalytic activity">
    <reaction evidence="3">
        <text>5-diphospho-1D-myo-inositol 1,2,3,4,6-pentakisphosphate + ATP + H(+) = 1,5-bis(diphospho)-1D-myo-inositol 2,3,4,6-tetrakisphosphate + ADP</text>
        <dbReference type="Rhea" id="RHEA:10276"/>
        <dbReference type="ChEBI" id="CHEBI:15378"/>
        <dbReference type="ChEBI" id="CHEBI:30616"/>
        <dbReference type="ChEBI" id="CHEBI:58628"/>
        <dbReference type="ChEBI" id="CHEBI:77983"/>
        <dbReference type="ChEBI" id="CHEBI:456216"/>
        <dbReference type="EC" id="2.7.4.24"/>
    </reaction>
    <physiologicalReaction direction="left-to-right" evidence="3">
        <dbReference type="Rhea" id="RHEA:10277"/>
    </physiologicalReaction>
</comment>
<comment type="subcellular location">
    <subcellularLocation>
        <location evidence="3">Cytoplasm</location>
        <location evidence="3">Cytosol</location>
    </subcellularLocation>
    <subcellularLocation>
        <location evidence="3">Cell membrane</location>
    </subcellularLocation>
    <text evidence="3">Relocalizes to the plasma membrane upon activation of the PtdIns 3-kinase pathway.</text>
</comment>
<comment type="domain">
    <text evidence="3">The C-terminal acid phosphatase-like domain binds PtdIns(3,4,5)P3 and InsP6. Despite its similarity with the phosphatase domain of histidine acid phosphatases, it has no phosphatase activity.</text>
</comment>
<comment type="similarity">
    <text evidence="5">Belongs to the histidine acid phosphatase family. VIP1 subfamily.</text>
</comment>
<organism>
    <name type="scientific">Bos taurus</name>
    <name type="common">Bovine</name>
    <dbReference type="NCBI Taxonomy" id="9913"/>
    <lineage>
        <taxon>Eukaryota</taxon>
        <taxon>Metazoa</taxon>
        <taxon>Chordata</taxon>
        <taxon>Craniata</taxon>
        <taxon>Vertebrata</taxon>
        <taxon>Euteleostomi</taxon>
        <taxon>Mammalia</taxon>
        <taxon>Eutheria</taxon>
        <taxon>Laurasiatheria</taxon>
        <taxon>Artiodactyla</taxon>
        <taxon>Ruminantia</taxon>
        <taxon>Pecora</taxon>
        <taxon>Bovidae</taxon>
        <taxon>Bovinae</taxon>
        <taxon>Bos</taxon>
    </lineage>
</organism>